<dbReference type="EMBL" id="CP000437">
    <property type="protein sequence ID" value="ABI82279.1"/>
    <property type="molecule type" value="Genomic_DNA"/>
</dbReference>
<dbReference type="RefSeq" id="WP_003014376.1">
    <property type="nucleotide sequence ID" value="NC_017463.1"/>
</dbReference>
<dbReference type="SMR" id="Q0BNQ5"/>
<dbReference type="KEGG" id="fth:FTH_0254"/>
<dbReference type="GO" id="GO:1990904">
    <property type="term" value="C:ribonucleoprotein complex"/>
    <property type="evidence" value="ECO:0007669"/>
    <property type="project" value="UniProtKB-KW"/>
</dbReference>
<dbReference type="GO" id="GO:0005840">
    <property type="term" value="C:ribosome"/>
    <property type="evidence" value="ECO:0007669"/>
    <property type="project" value="UniProtKB-KW"/>
</dbReference>
<dbReference type="GO" id="GO:0019843">
    <property type="term" value="F:rRNA binding"/>
    <property type="evidence" value="ECO:0007669"/>
    <property type="project" value="UniProtKB-UniRule"/>
</dbReference>
<dbReference type="GO" id="GO:0003735">
    <property type="term" value="F:structural constituent of ribosome"/>
    <property type="evidence" value="ECO:0007669"/>
    <property type="project" value="InterPro"/>
</dbReference>
<dbReference type="GO" id="GO:0006412">
    <property type="term" value="P:translation"/>
    <property type="evidence" value="ECO:0007669"/>
    <property type="project" value="UniProtKB-UniRule"/>
</dbReference>
<dbReference type="FunFam" id="3.30.420.80:FF:000001">
    <property type="entry name" value="30S ribosomal protein S11"/>
    <property type="match status" value="1"/>
</dbReference>
<dbReference type="Gene3D" id="3.30.420.80">
    <property type="entry name" value="Ribosomal protein S11"/>
    <property type="match status" value="1"/>
</dbReference>
<dbReference type="HAMAP" id="MF_01310">
    <property type="entry name" value="Ribosomal_uS11"/>
    <property type="match status" value="1"/>
</dbReference>
<dbReference type="InterPro" id="IPR001971">
    <property type="entry name" value="Ribosomal_uS11"/>
</dbReference>
<dbReference type="InterPro" id="IPR019981">
    <property type="entry name" value="Ribosomal_uS11_bac-type"/>
</dbReference>
<dbReference type="InterPro" id="IPR018102">
    <property type="entry name" value="Ribosomal_uS11_CS"/>
</dbReference>
<dbReference type="InterPro" id="IPR036967">
    <property type="entry name" value="Ribosomal_uS11_sf"/>
</dbReference>
<dbReference type="NCBIfam" id="NF003698">
    <property type="entry name" value="PRK05309.1"/>
    <property type="match status" value="1"/>
</dbReference>
<dbReference type="NCBIfam" id="TIGR03632">
    <property type="entry name" value="uS11_bact"/>
    <property type="match status" value="1"/>
</dbReference>
<dbReference type="PANTHER" id="PTHR11759">
    <property type="entry name" value="40S RIBOSOMAL PROTEIN S14/30S RIBOSOMAL PROTEIN S11"/>
    <property type="match status" value="1"/>
</dbReference>
<dbReference type="Pfam" id="PF00411">
    <property type="entry name" value="Ribosomal_S11"/>
    <property type="match status" value="1"/>
</dbReference>
<dbReference type="PIRSF" id="PIRSF002131">
    <property type="entry name" value="Ribosomal_S11"/>
    <property type="match status" value="1"/>
</dbReference>
<dbReference type="SUPFAM" id="SSF53137">
    <property type="entry name" value="Translational machinery components"/>
    <property type="match status" value="1"/>
</dbReference>
<dbReference type="PROSITE" id="PS00054">
    <property type="entry name" value="RIBOSOMAL_S11"/>
    <property type="match status" value="1"/>
</dbReference>
<feature type="chain" id="PRO_0000294757" description="Small ribosomal subunit protein uS11">
    <location>
        <begin position="1"/>
        <end position="129"/>
    </location>
</feature>
<proteinExistence type="inferred from homology"/>
<keyword id="KW-0687">Ribonucleoprotein</keyword>
<keyword id="KW-0689">Ribosomal protein</keyword>
<keyword id="KW-0694">RNA-binding</keyword>
<keyword id="KW-0699">rRNA-binding</keyword>
<gene>
    <name evidence="1" type="primary">rpsK</name>
    <name type="ordered locus">FTH_0254</name>
</gene>
<accession>Q0BNQ5</accession>
<evidence type="ECO:0000255" key="1">
    <source>
        <dbReference type="HAMAP-Rule" id="MF_01310"/>
    </source>
</evidence>
<evidence type="ECO:0000305" key="2"/>
<name>RS11_FRATO</name>
<comment type="function">
    <text evidence="1">Located on the platform of the 30S subunit, it bridges several disparate RNA helices of the 16S rRNA. Forms part of the Shine-Dalgarno cleft in the 70S ribosome.</text>
</comment>
<comment type="subunit">
    <text evidence="1">Part of the 30S ribosomal subunit. Interacts with proteins S7 and S18. Binds to IF-3.</text>
</comment>
<comment type="similarity">
    <text evidence="1">Belongs to the universal ribosomal protein uS11 family.</text>
</comment>
<protein>
    <recommendedName>
        <fullName evidence="1">Small ribosomal subunit protein uS11</fullName>
    </recommendedName>
    <alternativeName>
        <fullName evidence="2">30S ribosomal protein S11</fullName>
    </alternativeName>
</protein>
<organism>
    <name type="scientific">Francisella tularensis subsp. holarctica (strain OSU18)</name>
    <dbReference type="NCBI Taxonomy" id="393011"/>
    <lineage>
        <taxon>Bacteria</taxon>
        <taxon>Pseudomonadati</taxon>
        <taxon>Pseudomonadota</taxon>
        <taxon>Gammaproteobacteria</taxon>
        <taxon>Thiotrichales</taxon>
        <taxon>Francisellaceae</taxon>
        <taxon>Francisella</taxon>
    </lineage>
</organism>
<sequence>MAKSVRSSKKKVKRVVPDAVAHIYSSFNNTIVTITDRQGNALSWATSGGSGFRGSRKSTPFAAQVAAERAADMALEYGVKNVDVLVKGPGSGRDSAIRALNAKNLKVTSITDVTPLPHNGCRPPKKRRV</sequence>
<reference key="1">
    <citation type="journal article" date="2006" name="J. Bacteriol.">
        <title>Chromosome rearrangement and diversification of Francisella tularensis revealed by the type B (OSU18) genome sequence.</title>
        <authorList>
            <person name="Petrosino J.F."/>
            <person name="Xiang Q."/>
            <person name="Karpathy S.E."/>
            <person name="Jiang H."/>
            <person name="Yerrapragada S."/>
            <person name="Liu Y."/>
            <person name="Gioia J."/>
            <person name="Hemphill L."/>
            <person name="Gonzalez A."/>
            <person name="Raghavan T.M."/>
            <person name="Uzman A."/>
            <person name="Fox G.E."/>
            <person name="Highlander S."/>
            <person name="Reichard M."/>
            <person name="Morton R.J."/>
            <person name="Clinkenbeard K.D."/>
            <person name="Weinstock G.M."/>
        </authorList>
    </citation>
    <scope>NUCLEOTIDE SEQUENCE [LARGE SCALE GENOMIC DNA]</scope>
    <source>
        <strain>OSU18</strain>
    </source>
</reference>